<reference key="1">
    <citation type="journal article" date="2011" name="J. Bacteriol.">
        <title>Genome sequence of lineage III Listeria monocytogenes strain HCC23.</title>
        <authorList>
            <person name="Steele C.L."/>
            <person name="Donaldson J.R."/>
            <person name="Paul D."/>
            <person name="Banes M.M."/>
            <person name="Arick T."/>
            <person name="Bridges S.M."/>
            <person name="Lawrence M.L."/>
        </authorList>
    </citation>
    <scope>NUCLEOTIDE SEQUENCE [LARGE SCALE GENOMIC DNA]</scope>
    <source>
        <strain>HCC23</strain>
    </source>
</reference>
<sequence>MEKDDLTHFNDEKRAKMVDVTSKSETKRRAIARATIHMNEETLARILAGKIAKGDVLAVAQVAGIMAAKKTSELIPMCHPIMTTKADISFEDDGKTELTITSEVVTVGKTGVEMEALTAVTIAALTIYDMCKAMDKGMRIEKTYLVEKTGGKSGTFKAEA</sequence>
<comment type="function">
    <text evidence="1">Catalyzes the conversion of (8S)-3',8-cyclo-7,8-dihydroguanosine 5'-triphosphate to cyclic pyranopterin monophosphate (cPMP).</text>
</comment>
<comment type="catalytic activity">
    <reaction evidence="1">
        <text>(8S)-3',8-cyclo-7,8-dihydroguanosine 5'-triphosphate = cyclic pyranopterin phosphate + diphosphate</text>
        <dbReference type="Rhea" id="RHEA:49580"/>
        <dbReference type="ChEBI" id="CHEBI:33019"/>
        <dbReference type="ChEBI" id="CHEBI:59648"/>
        <dbReference type="ChEBI" id="CHEBI:131766"/>
        <dbReference type="EC" id="4.6.1.17"/>
    </reaction>
</comment>
<comment type="pathway">
    <text evidence="1">Cofactor biosynthesis; molybdopterin biosynthesis.</text>
</comment>
<comment type="subunit">
    <text evidence="1">Homohexamer; trimer of dimers.</text>
</comment>
<comment type="similarity">
    <text evidence="1">Belongs to the MoaC family.</text>
</comment>
<gene>
    <name evidence="1" type="primary">moaC</name>
    <name type="ordered locus">LMHCC_1582</name>
</gene>
<proteinExistence type="inferred from homology"/>
<name>MOAC_LISMH</name>
<feature type="chain" id="PRO_1000164893" description="Cyclic pyranopterin monophosphate synthase">
    <location>
        <begin position="1"/>
        <end position="160"/>
    </location>
</feature>
<feature type="active site" evidence="1">
    <location>
        <position position="129"/>
    </location>
</feature>
<feature type="binding site" evidence="1">
    <location>
        <begin position="77"/>
        <end position="79"/>
    </location>
    <ligand>
        <name>substrate</name>
    </ligand>
</feature>
<feature type="binding site" evidence="1">
    <location>
        <begin position="114"/>
        <end position="115"/>
    </location>
    <ligand>
        <name>substrate</name>
    </ligand>
</feature>
<keyword id="KW-0456">Lyase</keyword>
<keyword id="KW-0501">Molybdenum cofactor biosynthesis</keyword>
<dbReference type="EC" id="4.6.1.17" evidence="1"/>
<dbReference type="EMBL" id="CP001175">
    <property type="protein sequence ID" value="ACK39925.1"/>
    <property type="molecule type" value="Genomic_DNA"/>
</dbReference>
<dbReference type="RefSeq" id="WP_012581587.1">
    <property type="nucleotide sequence ID" value="NC_011660.1"/>
</dbReference>
<dbReference type="SMR" id="B8DCG2"/>
<dbReference type="KEGG" id="lmh:LMHCC_1582"/>
<dbReference type="HOGENOM" id="CLU_074693_1_1_9"/>
<dbReference type="UniPathway" id="UPA00344"/>
<dbReference type="GO" id="GO:0061799">
    <property type="term" value="F:cyclic pyranopterin monophosphate synthase activity"/>
    <property type="evidence" value="ECO:0007669"/>
    <property type="project" value="UniProtKB-UniRule"/>
</dbReference>
<dbReference type="GO" id="GO:0006777">
    <property type="term" value="P:Mo-molybdopterin cofactor biosynthetic process"/>
    <property type="evidence" value="ECO:0007669"/>
    <property type="project" value="UniProtKB-UniRule"/>
</dbReference>
<dbReference type="CDD" id="cd01420">
    <property type="entry name" value="MoaC_PE"/>
    <property type="match status" value="1"/>
</dbReference>
<dbReference type="Gene3D" id="3.30.70.640">
    <property type="entry name" value="Molybdopterin cofactor biosynthesis C (MoaC) domain"/>
    <property type="match status" value="1"/>
</dbReference>
<dbReference type="HAMAP" id="MF_01224_B">
    <property type="entry name" value="MoaC_B"/>
    <property type="match status" value="1"/>
</dbReference>
<dbReference type="InterPro" id="IPR023045">
    <property type="entry name" value="MoaC"/>
</dbReference>
<dbReference type="InterPro" id="IPR047594">
    <property type="entry name" value="MoaC_bact/euk"/>
</dbReference>
<dbReference type="InterPro" id="IPR036522">
    <property type="entry name" value="MoaC_sf"/>
</dbReference>
<dbReference type="InterPro" id="IPR050105">
    <property type="entry name" value="MoCo_biosynth_MoaA/MoaC"/>
</dbReference>
<dbReference type="InterPro" id="IPR002820">
    <property type="entry name" value="Mopterin_CF_biosynth-C_dom"/>
</dbReference>
<dbReference type="NCBIfam" id="TIGR00581">
    <property type="entry name" value="moaC"/>
    <property type="match status" value="1"/>
</dbReference>
<dbReference type="NCBIfam" id="NF006870">
    <property type="entry name" value="PRK09364.1"/>
    <property type="match status" value="1"/>
</dbReference>
<dbReference type="PANTHER" id="PTHR22960:SF29">
    <property type="entry name" value="CYCLIC PYRANOPTERIN MONOPHOSPHATE SYNTHASE"/>
    <property type="match status" value="1"/>
</dbReference>
<dbReference type="PANTHER" id="PTHR22960">
    <property type="entry name" value="MOLYBDOPTERIN COFACTOR SYNTHESIS PROTEIN A"/>
    <property type="match status" value="1"/>
</dbReference>
<dbReference type="Pfam" id="PF01967">
    <property type="entry name" value="MoaC"/>
    <property type="match status" value="1"/>
</dbReference>
<dbReference type="SUPFAM" id="SSF55040">
    <property type="entry name" value="Molybdenum cofactor biosynthesis protein C, MoaC"/>
    <property type="match status" value="1"/>
</dbReference>
<protein>
    <recommendedName>
        <fullName evidence="1">Cyclic pyranopterin monophosphate synthase</fullName>
        <ecNumber evidence="1">4.6.1.17</ecNumber>
    </recommendedName>
    <alternativeName>
        <fullName evidence="1">Molybdenum cofactor biosynthesis protein C</fullName>
    </alternativeName>
</protein>
<evidence type="ECO:0000255" key="1">
    <source>
        <dbReference type="HAMAP-Rule" id="MF_01224"/>
    </source>
</evidence>
<organism>
    <name type="scientific">Listeria monocytogenes serotype 4a (strain HCC23)</name>
    <dbReference type="NCBI Taxonomy" id="552536"/>
    <lineage>
        <taxon>Bacteria</taxon>
        <taxon>Bacillati</taxon>
        <taxon>Bacillota</taxon>
        <taxon>Bacilli</taxon>
        <taxon>Bacillales</taxon>
        <taxon>Listeriaceae</taxon>
        <taxon>Listeria</taxon>
    </lineage>
</organism>
<accession>B8DCG2</accession>